<reference key="1">
    <citation type="journal article" date="2007" name="J. Bacteriol.">
        <title>Complete genome sequence of Haemophilus somnus (Histophilus somni) strain 129Pt and comparison to Haemophilus ducreyi 35000HP and Haemophilus influenzae Rd.</title>
        <authorList>
            <person name="Challacombe J.F."/>
            <person name="Duncan A.J."/>
            <person name="Brettin T.S."/>
            <person name="Bruce D."/>
            <person name="Chertkov O."/>
            <person name="Detter J.C."/>
            <person name="Han C.S."/>
            <person name="Misra M."/>
            <person name="Richardson P."/>
            <person name="Tapia R."/>
            <person name="Thayer N."/>
            <person name="Xie G."/>
            <person name="Inzana T.J."/>
        </authorList>
    </citation>
    <scope>NUCLEOTIDE SEQUENCE [LARGE SCALE GENOMIC DNA]</scope>
    <source>
        <strain>129Pt</strain>
    </source>
</reference>
<evidence type="ECO:0000255" key="1">
    <source>
        <dbReference type="HAMAP-Rule" id="MF_00362"/>
    </source>
</evidence>
<evidence type="ECO:0000305" key="2"/>
<keyword id="KW-0687">Ribonucleoprotein</keyword>
<keyword id="KW-0689">Ribosomal protein</keyword>
<keyword id="KW-0694">RNA-binding</keyword>
<keyword id="KW-0699">rRNA-binding</keyword>
<organism>
    <name type="scientific">Histophilus somni (strain 129Pt)</name>
    <name type="common">Haemophilus somnus</name>
    <dbReference type="NCBI Taxonomy" id="205914"/>
    <lineage>
        <taxon>Bacteria</taxon>
        <taxon>Pseudomonadati</taxon>
        <taxon>Pseudomonadota</taxon>
        <taxon>Gammaproteobacteria</taxon>
        <taxon>Pasteurellales</taxon>
        <taxon>Pasteurellaceae</taxon>
        <taxon>Histophilus</taxon>
    </lineage>
</organism>
<sequence>MALNLQDKQAIVAEVNEAAKGALSAVIADSRGVTVDKMTELRKAAREAGVSMRVVRNTLLRRAVEGTAFECLTDTFVGPTLIAFSNEHPGAAARLFKDFAKANDKFEIKGAAFEGKIQNVEFLATLPTYEEAIARLMGTMKEAAAGKLARTLAAYRDKLQEAA</sequence>
<comment type="function">
    <text evidence="1">Forms part of the ribosomal stalk, playing a central role in the interaction of the ribosome with GTP-bound translation factors.</text>
</comment>
<comment type="subunit">
    <text evidence="1">Part of the ribosomal stalk of the 50S ribosomal subunit. The N-terminus interacts with L11 and the large rRNA to form the base of the stalk. The C-terminus forms an elongated spine to which L12 dimers bind in a sequential fashion forming a multimeric L10(L12)X complex.</text>
</comment>
<comment type="similarity">
    <text evidence="1">Belongs to the universal ribosomal protein uL10 family.</text>
</comment>
<name>RL10_HISS1</name>
<gene>
    <name evidence="1" type="primary">rplJ</name>
    <name type="ordered locus">HS_0171</name>
</gene>
<accession>Q0I0V0</accession>
<dbReference type="EMBL" id="CP000436">
    <property type="protein sequence ID" value="ABI24449.1"/>
    <property type="molecule type" value="Genomic_DNA"/>
</dbReference>
<dbReference type="KEGG" id="hso:HS_0171"/>
<dbReference type="eggNOG" id="COG0244">
    <property type="taxonomic scope" value="Bacteria"/>
</dbReference>
<dbReference type="HOGENOM" id="CLU_092227_0_2_6"/>
<dbReference type="GO" id="GO:0015934">
    <property type="term" value="C:large ribosomal subunit"/>
    <property type="evidence" value="ECO:0007669"/>
    <property type="project" value="InterPro"/>
</dbReference>
<dbReference type="GO" id="GO:0070180">
    <property type="term" value="F:large ribosomal subunit rRNA binding"/>
    <property type="evidence" value="ECO:0007669"/>
    <property type="project" value="UniProtKB-UniRule"/>
</dbReference>
<dbReference type="GO" id="GO:0003735">
    <property type="term" value="F:structural constituent of ribosome"/>
    <property type="evidence" value="ECO:0007669"/>
    <property type="project" value="InterPro"/>
</dbReference>
<dbReference type="GO" id="GO:0006412">
    <property type="term" value="P:translation"/>
    <property type="evidence" value="ECO:0007669"/>
    <property type="project" value="UniProtKB-UniRule"/>
</dbReference>
<dbReference type="CDD" id="cd05797">
    <property type="entry name" value="Ribosomal_L10"/>
    <property type="match status" value="1"/>
</dbReference>
<dbReference type="FunFam" id="3.30.70.1730:FF:000001">
    <property type="entry name" value="50S ribosomal protein L10"/>
    <property type="match status" value="1"/>
</dbReference>
<dbReference type="Gene3D" id="3.30.70.1730">
    <property type="match status" value="1"/>
</dbReference>
<dbReference type="Gene3D" id="6.10.250.2350">
    <property type="match status" value="1"/>
</dbReference>
<dbReference type="HAMAP" id="MF_00362">
    <property type="entry name" value="Ribosomal_uL10"/>
    <property type="match status" value="1"/>
</dbReference>
<dbReference type="InterPro" id="IPR001790">
    <property type="entry name" value="Ribosomal_uL10"/>
</dbReference>
<dbReference type="InterPro" id="IPR043141">
    <property type="entry name" value="Ribosomal_uL10-like_sf"/>
</dbReference>
<dbReference type="InterPro" id="IPR022973">
    <property type="entry name" value="Ribosomal_uL10_bac"/>
</dbReference>
<dbReference type="InterPro" id="IPR047865">
    <property type="entry name" value="Ribosomal_uL10_bac_type"/>
</dbReference>
<dbReference type="InterPro" id="IPR002363">
    <property type="entry name" value="Ribosomal_uL10_CS_bac"/>
</dbReference>
<dbReference type="NCBIfam" id="NF000955">
    <property type="entry name" value="PRK00099.1-1"/>
    <property type="match status" value="1"/>
</dbReference>
<dbReference type="PANTHER" id="PTHR11560">
    <property type="entry name" value="39S RIBOSOMAL PROTEIN L10, MITOCHONDRIAL"/>
    <property type="match status" value="1"/>
</dbReference>
<dbReference type="Pfam" id="PF00466">
    <property type="entry name" value="Ribosomal_L10"/>
    <property type="match status" value="1"/>
</dbReference>
<dbReference type="SUPFAM" id="SSF160369">
    <property type="entry name" value="Ribosomal protein L10-like"/>
    <property type="match status" value="1"/>
</dbReference>
<dbReference type="PROSITE" id="PS01109">
    <property type="entry name" value="RIBOSOMAL_L10"/>
    <property type="match status" value="1"/>
</dbReference>
<feature type="chain" id="PRO_1000005508" description="Large ribosomal subunit protein uL10">
    <location>
        <begin position="1"/>
        <end position="163"/>
    </location>
</feature>
<proteinExistence type="inferred from homology"/>
<protein>
    <recommendedName>
        <fullName evidence="1">Large ribosomal subunit protein uL10</fullName>
    </recommendedName>
    <alternativeName>
        <fullName evidence="2">50S ribosomal protein L10</fullName>
    </alternativeName>
</protein>